<gene>
    <name evidence="1" type="primary">uvrC</name>
    <name type="ordered locus">RF_0912</name>
</gene>
<organism>
    <name type="scientific">Rickettsia felis (strain ATCC VR-1525 / URRWXCal2)</name>
    <name type="common">Rickettsia azadi</name>
    <dbReference type="NCBI Taxonomy" id="315456"/>
    <lineage>
        <taxon>Bacteria</taxon>
        <taxon>Pseudomonadati</taxon>
        <taxon>Pseudomonadota</taxon>
        <taxon>Alphaproteobacteria</taxon>
        <taxon>Rickettsiales</taxon>
        <taxon>Rickettsiaceae</taxon>
        <taxon>Rickettsieae</taxon>
        <taxon>Rickettsia</taxon>
        <taxon>spotted fever group</taxon>
    </lineage>
</organism>
<name>UVRC_RICFE</name>
<evidence type="ECO:0000255" key="1">
    <source>
        <dbReference type="HAMAP-Rule" id="MF_00203"/>
    </source>
</evidence>
<protein>
    <recommendedName>
        <fullName evidence="1">UvrABC system protein C</fullName>
        <shortName evidence="1">Protein UvrC</shortName>
    </recommendedName>
    <alternativeName>
        <fullName evidence="1">Excinuclease ABC subunit C</fullName>
    </alternativeName>
</protein>
<reference key="1">
    <citation type="journal article" date="2005" name="PLoS Biol.">
        <title>The genome sequence of Rickettsia felis identifies the first putative conjugative plasmid in an obligate intracellular parasite.</title>
        <authorList>
            <person name="Ogata H."/>
            <person name="Renesto P."/>
            <person name="Audic S."/>
            <person name="Robert C."/>
            <person name="Blanc G."/>
            <person name="Fournier P.-E."/>
            <person name="Parinello H."/>
            <person name="Claverie J.-M."/>
            <person name="Raoult D."/>
        </authorList>
    </citation>
    <scope>NUCLEOTIDE SEQUENCE [LARGE SCALE GENOMIC DNA]</scope>
    <source>
        <strain>ATCC VR-1525 / URRWXCal2</strain>
    </source>
</reference>
<keyword id="KW-0963">Cytoplasm</keyword>
<keyword id="KW-0227">DNA damage</keyword>
<keyword id="KW-0228">DNA excision</keyword>
<keyword id="KW-0234">DNA repair</keyword>
<keyword id="KW-0267">Excision nuclease</keyword>
<keyword id="KW-0742">SOS response</keyword>
<proteinExistence type="inferred from homology"/>
<sequence length="642" mass="73315">MTLEITGSELIKSKLIDAPERCGVYRMFDVNKQVIYVGKAKNLKKRLTNYIKSDLDNKTLRMIANTCFLEYSITNSEVEALLLEAQLIKKFQPKFNILLKDDKSFPFIKLRLDHDFPQLLKYRGKTLNSGKFFGPFASSTEVNTTLTELQKIFKLRSCTDNYFNSRTRPCLQYEIKRCYAPCVGKINKEDYRDLVAQVKDFLQGRTKELQENLSKKMEELSSQMRFEEAAEIRDRIKALSYVQLKAGVSDIVKDADIIAIVEKNGHYCVEVFLYRAGQACGNIPYFPTSTENSTKEEVLEYFLLQFYQKQQVPAEIIINHEINDKENVIEAIKKINNITKLNIIIPISGGKAKLVQNAAINALFSLEQYLKKFAKNQEIMLEIKELFGLSEISERIEIYDNSHIQGKFAVGVMVVAGKAGFDKKEYRVFSLSSRNSSLSSHASPLSSRNLIAGSSSYFLDPVVKPRDDIVGDDYEMLRQVLTRRLTRLKNEPHKLPSLMIIDGGRGHLGVVKEVMDKFEMNIPFVCMSKGVDRNAGLEQFHMTGKEVFTLDKNLPIMKYLQILRDEAHNFAIKNHRLGRSRAIKLSSLDDIEGIGETRKKALLHYFGSYKAVCDATIDELTKVNGINKSLAEMIFRTLHKSL</sequence>
<feature type="chain" id="PRO_0000227469" description="UvrABC system protein C">
    <location>
        <begin position="1"/>
        <end position="642"/>
    </location>
</feature>
<feature type="domain" description="GIY-YIG" evidence="1">
    <location>
        <begin position="20"/>
        <end position="97"/>
    </location>
</feature>
<feature type="domain" description="UVR" evidence="1">
    <location>
        <begin position="207"/>
        <end position="242"/>
    </location>
</feature>
<dbReference type="EMBL" id="CP000053">
    <property type="protein sequence ID" value="AAY61763.1"/>
    <property type="molecule type" value="Genomic_DNA"/>
</dbReference>
<dbReference type="SMR" id="Q4UL10"/>
<dbReference type="STRING" id="315456.RF_0912"/>
<dbReference type="KEGG" id="rfe:RF_0912"/>
<dbReference type="eggNOG" id="COG0322">
    <property type="taxonomic scope" value="Bacteria"/>
</dbReference>
<dbReference type="HOGENOM" id="CLU_014841_3_0_5"/>
<dbReference type="OrthoDB" id="9804933at2"/>
<dbReference type="Proteomes" id="UP000008548">
    <property type="component" value="Chromosome"/>
</dbReference>
<dbReference type="GO" id="GO:0005737">
    <property type="term" value="C:cytoplasm"/>
    <property type="evidence" value="ECO:0007669"/>
    <property type="project" value="UniProtKB-SubCell"/>
</dbReference>
<dbReference type="GO" id="GO:0009380">
    <property type="term" value="C:excinuclease repair complex"/>
    <property type="evidence" value="ECO:0007669"/>
    <property type="project" value="InterPro"/>
</dbReference>
<dbReference type="GO" id="GO:0003677">
    <property type="term" value="F:DNA binding"/>
    <property type="evidence" value="ECO:0007669"/>
    <property type="project" value="UniProtKB-UniRule"/>
</dbReference>
<dbReference type="GO" id="GO:0009381">
    <property type="term" value="F:excinuclease ABC activity"/>
    <property type="evidence" value="ECO:0007669"/>
    <property type="project" value="UniProtKB-UniRule"/>
</dbReference>
<dbReference type="GO" id="GO:0006289">
    <property type="term" value="P:nucleotide-excision repair"/>
    <property type="evidence" value="ECO:0007669"/>
    <property type="project" value="UniProtKB-UniRule"/>
</dbReference>
<dbReference type="GO" id="GO:0009432">
    <property type="term" value="P:SOS response"/>
    <property type="evidence" value="ECO:0007669"/>
    <property type="project" value="UniProtKB-UniRule"/>
</dbReference>
<dbReference type="CDD" id="cd10434">
    <property type="entry name" value="GIY-YIG_UvrC_Cho"/>
    <property type="match status" value="1"/>
</dbReference>
<dbReference type="FunFam" id="3.40.1440.10:FF:000001">
    <property type="entry name" value="UvrABC system protein C"/>
    <property type="match status" value="1"/>
</dbReference>
<dbReference type="Gene3D" id="1.10.150.20">
    <property type="entry name" value="5' to 3' exonuclease, C-terminal subdomain"/>
    <property type="match status" value="1"/>
</dbReference>
<dbReference type="Gene3D" id="3.40.1440.10">
    <property type="entry name" value="GIY-YIG endonuclease"/>
    <property type="match status" value="1"/>
</dbReference>
<dbReference type="Gene3D" id="4.10.860.10">
    <property type="entry name" value="UVR domain"/>
    <property type="match status" value="1"/>
</dbReference>
<dbReference type="Gene3D" id="3.30.420.340">
    <property type="entry name" value="UvrC, RNAse H endonuclease domain"/>
    <property type="match status" value="1"/>
</dbReference>
<dbReference type="HAMAP" id="MF_00203">
    <property type="entry name" value="UvrC"/>
    <property type="match status" value="1"/>
</dbReference>
<dbReference type="InterPro" id="IPR000305">
    <property type="entry name" value="GIY-YIG_endonuc"/>
</dbReference>
<dbReference type="InterPro" id="IPR035901">
    <property type="entry name" value="GIY-YIG_endonuc_sf"/>
</dbReference>
<dbReference type="InterPro" id="IPR047296">
    <property type="entry name" value="GIY-YIG_UvrC_Cho"/>
</dbReference>
<dbReference type="InterPro" id="IPR003583">
    <property type="entry name" value="Hlx-hairpin-Hlx_DNA-bd_motif"/>
</dbReference>
<dbReference type="InterPro" id="IPR022439">
    <property type="entry name" value="RPE4"/>
</dbReference>
<dbReference type="InterPro" id="IPR010994">
    <property type="entry name" value="RuvA_2-like"/>
</dbReference>
<dbReference type="InterPro" id="IPR001943">
    <property type="entry name" value="UVR_dom"/>
</dbReference>
<dbReference type="InterPro" id="IPR036876">
    <property type="entry name" value="UVR_dom_sf"/>
</dbReference>
<dbReference type="InterPro" id="IPR050066">
    <property type="entry name" value="UvrABC_protein_C"/>
</dbReference>
<dbReference type="InterPro" id="IPR004791">
    <property type="entry name" value="UvrC"/>
</dbReference>
<dbReference type="InterPro" id="IPR001162">
    <property type="entry name" value="UvrC_RNase_H_dom"/>
</dbReference>
<dbReference type="InterPro" id="IPR038476">
    <property type="entry name" value="UvrC_RNase_H_dom_sf"/>
</dbReference>
<dbReference type="NCBIfam" id="TIGR03777">
    <property type="entry name" value="RPE4"/>
    <property type="match status" value="1"/>
</dbReference>
<dbReference type="NCBIfam" id="TIGR00194">
    <property type="entry name" value="uvrC"/>
    <property type="match status" value="1"/>
</dbReference>
<dbReference type="PANTHER" id="PTHR30562:SF1">
    <property type="entry name" value="UVRABC SYSTEM PROTEIN C"/>
    <property type="match status" value="1"/>
</dbReference>
<dbReference type="PANTHER" id="PTHR30562">
    <property type="entry name" value="UVRC/OXIDOREDUCTASE"/>
    <property type="match status" value="1"/>
</dbReference>
<dbReference type="Pfam" id="PF01541">
    <property type="entry name" value="GIY-YIG"/>
    <property type="match status" value="1"/>
</dbReference>
<dbReference type="Pfam" id="PF14520">
    <property type="entry name" value="HHH_5"/>
    <property type="match status" value="1"/>
</dbReference>
<dbReference type="Pfam" id="PF02151">
    <property type="entry name" value="UVR"/>
    <property type="match status" value="1"/>
</dbReference>
<dbReference type="Pfam" id="PF22920">
    <property type="entry name" value="UvrC_RNaseH"/>
    <property type="match status" value="1"/>
</dbReference>
<dbReference type="Pfam" id="PF08459">
    <property type="entry name" value="UvrC_RNaseH_dom"/>
    <property type="match status" value="2"/>
</dbReference>
<dbReference type="SMART" id="SM00465">
    <property type="entry name" value="GIYc"/>
    <property type="match status" value="1"/>
</dbReference>
<dbReference type="SMART" id="SM00278">
    <property type="entry name" value="HhH1"/>
    <property type="match status" value="2"/>
</dbReference>
<dbReference type="SUPFAM" id="SSF46600">
    <property type="entry name" value="C-terminal UvrC-binding domain of UvrB"/>
    <property type="match status" value="1"/>
</dbReference>
<dbReference type="SUPFAM" id="SSF82771">
    <property type="entry name" value="GIY-YIG endonuclease"/>
    <property type="match status" value="1"/>
</dbReference>
<dbReference type="SUPFAM" id="SSF47781">
    <property type="entry name" value="RuvA domain 2-like"/>
    <property type="match status" value="1"/>
</dbReference>
<dbReference type="PROSITE" id="PS50164">
    <property type="entry name" value="GIY_YIG"/>
    <property type="match status" value="1"/>
</dbReference>
<dbReference type="PROSITE" id="PS50151">
    <property type="entry name" value="UVR"/>
    <property type="match status" value="1"/>
</dbReference>
<dbReference type="PROSITE" id="PS50165">
    <property type="entry name" value="UVRC"/>
    <property type="match status" value="1"/>
</dbReference>
<accession>Q4UL10</accession>
<comment type="function">
    <text evidence="1">The UvrABC repair system catalyzes the recognition and processing of DNA lesions. UvrC both incises the 5' and 3' sides of the lesion. The N-terminal half is responsible for the 3' incision and the C-terminal half is responsible for the 5' incision.</text>
</comment>
<comment type="subunit">
    <text evidence="1">Interacts with UvrB in an incision complex.</text>
</comment>
<comment type="subcellular location">
    <subcellularLocation>
        <location evidence="1">Cytoplasm</location>
    </subcellularLocation>
</comment>
<comment type="similarity">
    <text evidence="1">Belongs to the UvrC family.</text>
</comment>